<organism>
    <name type="scientific">Archaeoglobus fulgidus (strain ATCC 49558 / DSM 4304 / JCM 9628 / NBRC 100126 / VC-16)</name>
    <dbReference type="NCBI Taxonomy" id="224325"/>
    <lineage>
        <taxon>Archaea</taxon>
        <taxon>Methanobacteriati</taxon>
        <taxon>Methanobacteriota</taxon>
        <taxon>Archaeoglobi</taxon>
        <taxon>Archaeoglobales</taxon>
        <taxon>Archaeoglobaceae</taxon>
        <taxon>Archaeoglobus</taxon>
    </lineage>
</organism>
<accession>O30321</accession>
<gene>
    <name type="ordered locus">AF_2348</name>
</gene>
<reference key="1">
    <citation type="journal article" date="1997" name="Nature">
        <title>The complete genome sequence of the hyperthermophilic, sulphate-reducing archaeon Archaeoglobus fulgidus.</title>
        <authorList>
            <person name="Klenk H.-P."/>
            <person name="Clayton R.A."/>
            <person name="Tomb J.-F."/>
            <person name="White O."/>
            <person name="Nelson K.E."/>
            <person name="Ketchum K.A."/>
            <person name="Dodson R.J."/>
            <person name="Gwinn M.L."/>
            <person name="Hickey E.K."/>
            <person name="Peterson J.D."/>
            <person name="Richardson D.L."/>
            <person name="Kerlavage A.R."/>
            <person name="Graham D.E."/>
            <person name="Kyrpides N.C."/>
            <person name="Fleischmann R.D."/>
            <person name="Quackenbush J."/>
            <person name="Lee N.H."/>
            <person name="Sutton G.G."/>
            <person name="Gill S.R."/>
            <person name="Kirkness E.F."/>
            <person name="Dougherty B.A."/>
            <person name="McKenney K."/>
            <person name="Adams M.D."/>
            <person name="Loftus B.J."/>
            <person name="Peterson S.N."/>
            <person name="Reich C.I."/>
            <person name="McNeil L.K."/>
            <person name="Badger J.H."/>
            <person name="Glodek A."/>
            <person name="Zhou L."/>
            <person name="Overbeek R."/>
            <person name="Gocayne J.D."/>
            <person name="Weidman J.F."/>
            <person name="McDonald L.A."/>
            <person name="Utterback T.R."/>
            <person name="Cotton M.D."/>
            <person name="Spriggs T."/>
            <person name="Artiach P."/>
            <person name="Kaine B.P."/>
            <person name="Sykes S.M."/>
            <person name="Sadow P.W."/>
            <person name="D'Andrea K.P."/>
            <person name="Bowman C."/>
            <person name="Fujii C."/>
            <person name="Garland S.A."/>
            <person name="Mason T.M."/>
            <person name="Olsen G.J."/>
            <person name="Fraser C.M."/>
            <person name="Smith H.O."/>
            <person name="Woese C.R."/>
            <person name="Venter J.C."/>
        </authorList>
    </citation>
    <scope>NUCLEOTIDE SEQUENCE [LARGE SCALE GENOMIC DNA]</scope>
    <source>
        <strain>ATCC 49558 / DSM 4304 / JCM 9628 / NBRC 100126 / VC-16</strain>
    </source>
</reference>
<proteinExistence type="predicted"/>
<dbReference type="EMBL" id="AE000782">
    <property type="protein sequence ID" value="AAB91315.1"/>
    <property type="molecule type" value="Genomic_DNA"/>
</dbReference>
<dbReference type="PIR" id="D69543">
    <property type="entry name" value="D69543"/>
</dbReference>
<dbReference type="RefSeq" id="WP_010879835.1">
    <property type="nucleotide sequence ID" value="NC_000917.1"/>
</dbReference>
<dbReference type="SMR" id="O30321"/>
<dbReference type="STRING" id="224325.AF_2348"/>
<dbReference type="PaxDb" id="224325-AF_2348"/>
<dbReference type="EnsemblBacteria" id="AAB91315">
    <property type="protein sequence ID" value="AAB91315"/>
    <property type="gene ID" value="AF_2348"/>
</dbReference>
<dbReference type="GeneID" id="1485578"/>
<dbReference type="KEGG" id="afu:AF_2348"/>
<dbReference type="HOGENOM" id="CLU_2140066_0_0_2"/>
<dbReference type="Proteomes" id="UP000002199">
    <property type="component" value="Chromosome"/>
</dbReference>
<protein>
    <recommendedName>
        <fullName>Uncharacterized protein AF_2348</fullName>
    </recommendedName>
</protein>
<sequence length="112" mass="13012">MKSRSRKSVILQDYYRGDSNIEVAGYDTIRGNSLIDYIHKALRAYDIEGMKGFDRVRSEIPYSMKAVIGVLQALARIRLDPSRKNDREANRAAEILEHLRMLDEKLERWGVK</sequence>
<name>Y2348_ARCFU</name>
<feature type="chain" id="PRO_0000128145" description="Uncharacterized protein AF_2348">
    <location>
        <begin position="1"/>
        <end position="112"/>
    </location>
</feature>
<keyword id="KW-1185">Reference proteome</keyword>